<gene>
    <name evidence="1" type="primary">rpsR</name>
    <name type="ordered locus">Acry_1511</name>
</gene>
<accession>A5FYN7</accession>
<organism>
    <name type="scientific">Acidiphilium cryptum (strain JF-5)</name>
    <dbReference type="NCBI Taxonomy" id="349163"/>
    <lineage>
        <taxon>Bacteria</taxon>
        <taxon>Pseudomonadati</taxon>
        <taxon>Pseudomonadota</taxon>
        <taxon>Alphaproteobacteria</taxon>
        <taxon>Acetobacterales</taxon>
        <taxon>Acidocellaceae</taxon>
        <taxon>Acidiphilium</taxon>
    </lineage>
</organism>
<proteinExistence type="inferred from homology"/>
<name>RS18_ACICJ</name>
<evidence type="ECO:0000255" key="1">
    <source>
        <dbReference type="HAMAP-Rule" id="MF_00270"/>
    </source>
</evidence>
<evidence type="ECO:0000305" key="2"/>
<feature type="chain" id="PRO_0000345432" description="Small ribosomal subunit protein bS18">
    <location>
        <begin position="1"/>
        <end position="95"/>
    </location>
</feature>
<keyword id="KW-1185">Reference proteome</keyword>
<keyword id="KW-0687">Ribonucleoprotein</keyword>
<keyword id="KW-0689">Ribosomal protein</keyword>
<keyword id="KW-0694">RNA-binding</keyword>
<keyword id="KW-0699">rRNA-binding</keyword>
<sequence>MSDSIETAPVNTPAARRTAVGARRPFYRRRKACPFSGPNAPKIDYKDVRLLSRFLSERGKIVPSRITAVSAKKQRELARAIKRARFLALLPYVVD</sequence>
<reference key="1">
    <citation type="submission" date="2007-05" db="EMBL/GenBank/DDBJ databases">
        <title>Complete sequence of chromosome of Acidiphilium cryptum JF-5.</title>
        <authorList>
            <consortium name="US DOE Joint Genome Institute"/>
            <person name="Copeland A."/>
            <person name="Lucas S."/>
            <person name="Lapidus A."/>
            <person name="Barry K."/>
            <person name="Detter J.C."/>
            <person name="Glavina del Rio T."/>
            <person name="Hammon N."/>
            <person name="Israni S."/>
            <person name="Dalin E."/>
            <person name="Tice H."/>
            <person name="Pitluck S."/>
            <person name="Sims D."/>
            <person name="Brettin T."/>
            <person name="Bruce D."/>
            <person name="Han C."/>
            <person name="Schmutz J."/>
            <person name="Larimer F."/>
            <person name="Land M."/>
            <person name="Hauser L."/>
            <person name="Kyrpides N."/>
            <person name="Kim E."/>
            <person name="Magnuson T."/>
            <person name="Richardson P."/>
        </authorList>
    </citation>
    <scope>NUCLEOTIDE SEQUENCE [LARGE SCALE GENOMIC DNA]</scope>
    <source>
        <strain>JF-5</strain>
    </source>
</reference>
<protein>
    <recommendedName>
        <fullName evidence="1">Small ribosomal subunit protein bS18</fullName>
    </recommendedName>
    <alternativeName>
        <fullName evidence="2">30S ribosomal protein S18</fullName>
    </alternativeName>
</protein>
<dbReference type="EMBL" id="CP000697">
    <property type="protein sequence ID" value="ABQ30719.1"/>
    <property type="molecule type" value="Genomic_DNA"/>
</dbReference>
<dbReference type="RefSeq" id="WP_011942298.1">
    <property type="nucleotide sequence ID" value="NC_009484.1"/>
</dbReference>
<dbReference type="SMR" id="A5FYN7"/>
<dbReference type="STRING" id="349163.Acry_1511"/>
<dbReference type="KEGG" id="acr:Acry_1511"/>
<dbReference type="eggNOG" id="COG0238">
    <property type="taxonomic scope" value="Bacteria"/>
</dbReference>
<dbReference type="HOGENOM" id="CLU_148710_2_1_5"/>
<dbReference type="Proteomes" id="UP000000245">
    <property type="component" value="Chromosome"/>
</dbReference>
<dbReference type="GO" id="GO:0022627">
    <property type="term" value="C:cytosolic small ribosomal subunit"/>
    <property type="evidence" value="ECO:0007669"/>
    <property type="project" value="TreeGrafter"/>
</dbReference>
<dbReference type="GO" id="GO:0070181">
    <property type="term" value="F:small ribosomal subunit rRNA binding"/>
    <property type="evidence" value="ECO:0007669"/>
    <property type="project" value="TreeGrafter"/>
</dbReference>
<dbReference type="GO" id="GO:0003735">
    <property type="term" value="F:structural constituent of ribosome"/>
    <property type="evidence" value="ECO:0007669"/>
    <property type="project" value="InterPro"/>
</dbReference>
<dbReference type="GO" id="GO:0006412">
    <property type="term" value="P:translation"/>
    <property type="evidence" value="ECO:0007669"/>
    <property type="project" value="UniProtKB-UniRule"/>
</dbReference>
<dbReference type="Gene3D" id="4.10.640.10">
    <property type="entry name" value="Ribosomal protein S18"/>
    <property type="match status" value="1"/>
</dbReference>
<dbReference type="HAMAP" id="MF_00270">
    <property type="entry name" value="Ribosomal_bS18"/>
    <property type="match status" value="1"/>
</dbReference>
<dbReference type="InterPro" id="IPR001648">
    <property type="entry name" value="Ribosomal_bS18"/>
</dbReference>
<dbReference type="InterPro" id="IPR018275">
    <property type="entry name" value="Ribosomal_bS18_CS"/>
</dbReference>
<dbReference type="InterPro" id="IPR036870">
    <property type="entry name" value="Ribosomal_bS18_sf"/>
</dbReference>
<dbReference type="NCBIfam" id="TIGR00165">
    <property type="entry name" value="S18"/>
    <property type="match status" value="1"/>
</dbReference>
<dbReference type="PANTHER" id="PTHR13479">
    <property type="entry name" value="30S RIBOSOMAL PROTEIN S18"/>
    <property type="match status" value="1"/>
</dbReference>
<dbReference type="PANTHER" id="PTHR13479:SF40">
    <property type="entry name" value="SMALL RIBOSOMAL SUBUNIT PROTEIN BS18M"/>
    <property type="match status" value="1"/>
</dbReference>
<dbReference type="Pfam" id="PF01084">
    <property type="entry name" value="Ribosomal_S18"/>
    <property type="match status" value="1"/>
</dbReference>
<dbReference type="PRINTS" id="PR00974">
    <property type="entry name" value="RIBOSOMALS18"/>
</dbReference>
<dbReference type="SUPFAM" id="SSF46911">
    <property type="entry name" value="Ribosomal protein S18"/>
    <property type="match status" value="1"/>
</dbReference>
<dbReference type="PROSITE" id="PS00057">
    <property type="entry name" value="RIBOSOMAL_S18"/>
    <property type="match status" value="1"/>
</dbReference>
<comment type="function">
    <text evidence="1">Binds as a heterodimer with protein bS6 to the central domain of the 16S rRNA, where it helps stabilize the platform of the 30S subunit.</text>
</comment>
<comment type="subunit">
    <text evidence="1">Part of the 30S ribosomal subunit. Forms a tight heterodimer with protein bS6.</text>
</comment>
<comment type="similarity">
    <text evidence="1">Belongs to the bacterial ribosomal protein bS18 family.</text>
</comment>